<accession>B7GLN3</accession>
<gene>
    <name evidence="1" type="primary">mscL</name>
    <name type="ordered locus">Aflv_2070</name>
</gene>
<sequence length="131" mass="14651">MWQEFKKFAVRGNVIDLAVGVIIGGAFGKIVSSLVNDIIMPLVGLILGGIDFSGLSWKVGEAEVKYGAFLQTVVDFLVIAFSIFLFVKLLNNLHERIKKQEETKQTAPTMTKEQQLLTEIRDLLKQQKETP</sequence>
<dbReference type="EMBL" id="CP000922">
    <property type="protein sequence ID" value="ACJ34429.1"/>
    <property type="molecule type" value="Genomic_DNA"/>
</dbReference>
<dbReference type="RefSeq" id="WP_012575613.1">
    <property type="nucleotide sequence ID" value="NC_011567.1"/>
</dbReference>
<dbReference type="STRING" id="491915.Aflv_2070"/>
<dbReference type="GeneID" id="7038323"/>
<dbReference type="KEGG" id="afl:Aflv_2070"/>
<dbReference type="PATRIC" id="fig|491915.6.peg.2125"/>
<dbReference type="eggNOG" id="COG1970">
    <property type="taxonomic scope" value="Bacteria"/>
</dbReference>
<dbReference type="HOGENOM" id="CLU_095787_0_0_9"/>
<dbReference type="Proteomes" id="UP000000742">
    <property type="component" value="Chromosome"/>
</dbReference>
<dbReference type="GO" id="GO:0005886">
    <property type="term" value="C:plasma membrane"/>
    <property type="evidence" value="ECO:0007669"/>
    <property type="project" value="UniProtKB-SubCell"/>
</dbReference>
<dbReference type="GO" id="GO:0008381">
    <property type="term" value="F:mechanosensitive monoatomic ion channel activity"/>
    <property type="evidence" value="ECO:0007669"/>
    <property type="project" value="UniProtKB-UniRule"/>
</dbReference>
<dbReference type="FunFam" id="1.10.1200.120:FF:000001">
    <property type="entry name" value="Large-conductance mechanosensitive channel"/>
    <property type="match status" value="1"/>
</dbReference>
<dbReference type="Gene3D" id="1.10.1200.120">
    <property type="entry name" value="Large-conductance mechanosensitive channel, MscL, domain 1"/>
    <property type="match status" value="1"/>
</dbReference>
<dbReference type="HAMAP" id="MF_00115">
    <property type="entry name" value="MscL"/>
    <property type="match status" value="1"/>
</dbReference>
<dbReference type="InterPro" id="IPR019823">
    <property type="entry name" value="Mechanosensitive_channel_CS"/>
</dbReference>
<dbReference type="InterPro" id="IPR001185">
    <property type="entry name" value="MS_channel"/>
</dbReference>
<dbReference type="InterPro" id="IPR037673">
    <property type="entry name" value="MSC/AndL"/>
</dbReference>
<dbReference type="InterPro" id="IPR036019">
    <property type="entry name" value="MscL_channel"/>
</dbReference>
<dbReference type="NCBIfam" id="TIGR00220">
    <property type="entry name" value="mscL"/>
    <property type="match status" value="1"/>
</dbReference>
<dbReference type="NCBIfam" id="NF001843">
    <property type="entry name" value="PRK00567.1-4"/>
    <property type="match status" value="1"/>
</dbReference>
<dbReference type="NCBIfam" id="NF010558">
    <property type="entry name" value="PRK13953.1"/>
    <property type="match status" value="1"/>
</dbReference>
<dbReference type="NCBIfam" id="NF010560">
    <property type="entry name" value="PRK13955.1"/>
    <property type="match status" value="1"/>
</dbReference>
<dbReference type="PANTHER" id="PTHR30266:SF2">
    <property type="entry name" value="LARGE-CONDUCTANCE MECHANOSENSITIVE CHANNEL"/>
    <property type="match status" value="1"/>
</dbReference>
<dbReference type="PANTHER" id="PTHR30266">
    <property type="entry name" value="MECHANOSENSITIVE CHANNEL MSCL"/>
    <property type="match status" value="1"/>
</dbReference>
<dbReference type="Pfam" id="PF01741">
    <property type="entry name" value="MscL"/>
    <property type="match status" value="1"/>
</dbReference>
<dbReference type="PRINTS" id="PR01264">
    <property type="entry name" value="MECHCHANNEL"/>
</dbReference>
<dbReference type="SUPFAM" id="SSF81330">
    <property type="entry name" value="Gated mechanosensitive channel"/>
    <property type="match status" value="1"/>
</dbReference>
<dbReference type="PROSITE" id="PS01327">
    <property type="entry name" value="MSCL"/>
    <property type="match status" value="1"/>
</dbReference>
<protein>
    <recommendedName>
        <fullName evidence="1">Large-conductance mechanosensitive channel</fullName>
    </recommendedName>
</protein>
<comment type="function">
    <text evidence="1">Channel that opens in response to stretch forces in the membrane lipid bilayer. May participate in the regulation of osmotic pressure changes within the cell.</text>
</comment>
<comment type="subunit">
    <text evidence="1">Homopentamer.</text>
</comment>
<comment type="subcellular location">
    <subcellularLocation>
        <location evidence="1">Cell membrane</location>
        <topology evidence="1">Multi-pass membrane protein</topology>
    </subcellularLocation>
</comment>
<comment type="similarity">
    <text evidence="1">Belongs to the MscL family.</text>
</comment>
<proteinExistence type="inferred from homology"/>
<evidence type="ECO:0000255" key="1">
    <source>
        <dbReference type="HAMAP-Rule" id="MF_00115"/>
    </source>
</evidence>
<keyword id="KW-1003">Cell membrane</keyword>
<keyword id="KW-0407">Ion channel</keyword>
<keyword id="KW-0406">Ion transport</keyword>
<keyword id="KW-0472">Membrane</keyword>
<keyword id="KW-0812">Transmembrane</keyword>
<keyword id="KW-1133">Transmembrane helix</keyword>
<keyword id="KW-0813">Transport</keyword>
<feature type="chain" id="PRO_1000117548" description="Large-conductance mechanosensitive channel">
    <location>
        <begin position="1"/>
        <end position="131"/>
    </location>
</feature>
<feature type="transmembrane region" description="Helical" evidence="1">
    <location>
        <begin position="8"/>
        <end position="28"/>
    </location>
</feature>
<feature type="transmembrane region" description="Helical" evidence="1">
    <location>
        <begin position="30"/>
        <end position="50"/>
    </location>
</feature>
<feature type="transmembrane region" description="Helical" evidence="1">
    <location>
        <begin position="67"/>
        <end position="87"/>
    </location>
</feature>
<reference key="1">
    <citation type="journal article" date="2008" name="Genome Biol.">
        <title>Encapsulated in silica: genome, proteome and physiology of the thermophilic bacterium Anoxybacillus flavithermus WK1.</title>
        <authorList>
            <person name="Saw J.H."/>
            <person name="Mountain B.W."/>
            <person name="Feng L."/>
            <person name="Omelchenko M.V."/>
            <person name="Hou S."/>
            <person name="Saito J.A."/>
            <person name="Stott M.B."/>
            <person name="Li D."/>
            <person name="Zhao G."/>
            <person name="Wu J."/>
            <person name="Galperin M.Y."/>
            <person name="Koonin E.V."/>
            <person name="Makarova K.S."/>
            <person name="Wolf Y.I."/>
            <person name="Rigden D.J."/>
            <person name="Dunfield P.F."/>
            <person name="Wang L."/>
            <person name="Alam M."/>
        </authorList>
    </citation>
    <scope>NUCLEOTIDE SEQUENCE [LARGE SCALE GENOMIC DNA]</scope>
    <source>
        <strain>DSM 21510 / WK1</strain>
    </source>
</reference>
<organism>
    <name type="scientific">Anoxybacillus flavithermus (strain DSM 21510 / WK1)</name>
    <dbReference type="NCBI Taxonomy" id="491915"/>
    <lineage>
        <taxon>Bacteria</taxon>
        <taxon>Bacillati</taxon>
        <taxon>Bacillota</taxon>
        <taxon>Bacilli</taxon>
        <taxon>Bacillales</taxon>
        <taxon>Anoxybacillaceae</taxon>
        <taxon>Anoxybacillus</taxon>
    </lineage>
</organism>
<name>MSCL_ANOFW</name>